<evidence type="ECO:0000255" key="1">
    <source>
        <dbReference type="HAMAP-Rule" id="MF_01030"/>
    </source>
</evidence>
<protein>
    <recommendedName>
        <fullName evidence="1">Probable D-serine dehydratase</fullName>
        <ecNumber evidence="1">4.3.1.18</ecNumber>
    </recommendedName>
    <alternativeName>
        <fullName evidence="1">D-serine deaminase</fullName>
        <shortName evidence="1">DSD</shortName>
    </alternativeName>
</protein>
<accession>Q63IF8</accession>
<comment type="catalytic activity">
    <reaction evidence="1">
        <text>D-serine = pyruvate + NH4(+)</text>
        <dbReference type="Rhea" id="RHEA:13977"/>
        <dbReference type="ChEBI" id="CHEBI:15361"/>
        <dbReference type="ChEBI" id="CHEBI:28938"/>
        <dbReference type="ChEBI" id="CHEBI:35247"/>
        <dbReference type="EC" id="4.3.1.18"/>
    </reaction>
</comment>
<comment type="cofactor">
    <cofactor evidence="1">
        <name>pyridoxal 5'-phosphate</name>
        <dbReference type="ChEBI" id="CHEBI:597326"/>
    </cofactor>
</comment>
<comment type="similarity">
    <text evidence="1">Belongs to the serine/threonine dehydratase family. DsdA subfamily.</text>
</comment>
<sequence length="445" mass="46320">MPVGRSLSLDPNLLAQLQSHSPTLWLNPHQGMPLPDFAPTAADLADADARLRRCAGLLAELFAELRPSGGLIASPLQPAEPLKRAARAGHAQAGAWYVKRDDALPVAGSIKARGGFHEVLALAESIAERHGLAGADTDRRALASGAARARFARHTVMVGSTGNLGLSIGMLASALGFRTVVHMSADAKAWKKARLRTRGVEVVEHAGDYAKAVDAGRRQAAGMPCCHFVDDEGSRMLFLGYATAAAELAAQLAQAGRPVDARHPLFVHLPCGVGGAPGGIVYGLKALYGEHVHAFVAEPTASPCVLVQLAGDAAHPRSVYDIGLDNRTEADGLAVAQASPLAAALLRAQAAGAFTVDDRQLFAHLLDARERLGIDLEPSAAAAFGGPAWIAGSDAGRAYLRGRGIDPDAATHVIWATGGSLVPAQEHRRFQAHARAQRQVGGAGA</sequence>
<dbReference type="EC" id="4.3.1.18" evidence="1"/>
<dbReference type="EMBL" id="BX571966">
    <property type="protein sequence ID" value="CAH39596.1"/>
    <property type="molecule type" value="Genomic_DNA"/>
</dbReference>
<dbReference type="RefSeq" id="WP_004524797.1">
    <property type="nucleotide sequence ID" value="NZ_CP009537.1"/>
</dbReference>
<dbReference type="RefSeq" id="YP_112114.1">
    <property type="nucleotide sequence ID" value="NC_006351.1"/>
</dbReference>
<dbReference type="SMR" id="Q63IF8"/>
<dbReference type="STRING" id="272560.BPSS2116"/>
<dbReference type="KEGG" id="bps:BPSS2116"/>
<dbReference type="PATRIC" id="fig|272560.51.peg.5662"/>
<dbReference type="eggNOG" id="COG3048">
    <property type="taxonomic scope" value="Bacteria"/>
</dbReference>
<dbReference type="Proteomes" id="UP000000605">
    <property type="component" value="Chromosome 2"/>
</dbReference>
<dbReference type="GO" id="GO:0008721">
    <property type="term" value="F:D-serine ammonia-lyase activity"/>
    <property type="evidence" value="ECO:0007669"/>
    <property type="project" value="UniProtKB-EC"/>
</dbReference>
<dbReference type="GO" id="GO:0016836">
    <property type="term" value="F:hydro-lyase activity"/>
    <property type="evidence" value="ECO:0007669"/>
    <property type="project" value="UniProtKB-UniRule"/>
</dbReference>
<dbReference type="GO" id="GO:0030170">
    <property type="term" value="F:pyridoxal phosphate binding"/>
    <property type="evidence" value="ECO:0007669"/>
    <property type="project" value="InterPro"/>
</dbReference>
<dbReference type="GO" id="GO:0036088">
    <property type="term" value="P:D-serine catabolic process"/>
    <property type="evidence" value="ECO:0007669"/>
    <property type="project" value="TreeGrafter"/>
</dbReference>
<dbReference type="GO" id="GO:0009097">
    <property type="term" value="P:isoleucine biosynthetic process"/>
    <property type="evidence" value="ECO:0007669"/>
    <property type="project" value="TreeGrafter"/>
</dbReference>
<dbReference type="Gene3D" id="3.40.50.1100">
    <property type="match status" value="2"/>
</dbReference>
<dbReference type="HAMAP" id="MF_01030">
    <property type="entry name" value="D_Ser_dehydrat"/>
    <property type="match status" value="1"/>
</dbReference>
<dbReference type="InterPro" id="IPR011780">
    <property type="entry name" value="D_Ser_am_lyase"/>
</dbReference>
<dbReference type="InterPro" id="IPR050147">
    <property type="entry name" value="Ser/Thr_Dehydratase"/>
</dbReference>
<dbReference type="InterPro" id="IPR001926">
    <property type="entry name" value="TrpB-like_PALP"/>
</dbReference>
<dbReference type="InterPro" id="IPR036052">
    <property type="entry name" value="TrpB-like_PALP_sf"/>
</dbReference>
<dbReference type="NCBIfam" id="TIGR02035">
    <property type="entry name" value="D_Ser_am_lyase"/>
    <property type="match status" value="1"/>
</dbReference>
<dbReference type="NCBIfam" id="NF002823">
    <property type="entry name" value="PRK02991.1"/>
    <property type="match status" value="1"/>
</dbReference>
<dbReference type="PANTHER" id="PTHR48078:SF9">
    <property type="entry name" value="D-SERINE DEHYDRATASE"/>
    <property type="match status" value="1"/>
</dbReference>
<dbReference type="PANTHER" id="PTHR48078">
    <property type="entry name" value="THREONINE DEHYDRATASE, MITOCHONDRIAL-RELATED"/>
    <property type="match status" value="1"/>
</dbReference>
<dbReference type="Pfam" id="PF00291">
    <property type="entry name" value="PALP"/>
    <property type="match status" value="1"/>
</dbReference>
<dbReference type="SUPFAM" id="SSF53686">
    <property type="entry name" value="Tryptophan synthase beta subunit-like PLP-dependent enzymes"/>
    <property type="match status" value="1"/>
</dbReference>
<organism>
    <name type="scientific">Burkholderia pseudomallei (strain K96243)</name>
    <dbReference type="NCBI Taxonomy" id="272560"/>
    <lineage>
        <taxon>Bacteria</taxon>
        <taxon>Pseudomonadati</taxon>
        <taxon>Pseudomonadota</taxon>
        <taxon>Betaproteobacteria</taxon>
        <taxon>Burkholderiales</taxon>
        <taxon>Burkholderiaceae</taxon>
        <taxon>Burkholderia</taxon>
        <taxon>pseudomallei group</taxon>
    </lineage>
</organism>
<feature type="chain" id="PRO_0000185609" description="Probable D-serine dehydratase">
    <location>
        <begin position="1"/>
        <end position="445"/>
    </location>
</feature>
<feature type="modified residue" description="N6-(pyridoxal phosphate)lysine" evidence="1">
    <location>
        <position position="111"/>
    </location>
</feature>
<proteinExistence type="inferred from homology"/>
<reference key="1">
    <citation type="journal article" date="2004" name="Proc. Natl. Acad. Sci. U.S.A.">
        <title>Genomic plasticity of the causative agent of melioidosis, Burkholderia pseudomallei.</title>
        <authorList>
            <person name="Holden M.T.G."/>
            <person name="Titball R.W."/>
            <person name="Peacock S.J."/>
            <person name="Cerdeno-Tarraga A.-M."/>
            <person name="Atkins T."/>
            <person name="Crossman L.C."/>
            <person name="Pitt T."/>
            <person name="Churcher C."/>
            <person name="Mungall K.L."/>
            <person name="Bentley S.D."/>
            <person name="Sebaihia M."/>
            <person name="Thomson N.R."/>
            <person name="Bason N."/>
            <person name="Beacham I.R."/>
            <person name="Brooks K."/>
            <person name="Brown K.A."/>
            <person name="Brown N.F."/>
            <person name="Challis G.L."/>
            <person name="Cherevach I."/>
            <person name="Chillingworth T."/>
            <person name="Cronin A."/>
            <person name="Crossett B."/>
            <person name="Davis P."/>
            <person name="DeShazer D."/>
            <person name="Feltwell T."/>
            <person name="Fraser A."/>
            <person name="Hance Z."/>
            <person name="Hauser H."/>
            <person name="Holroyd S."/>
            <person name="Jagels K."/>
            <person name="Keith K.E."/>
            <person name="Maddison M."/>
            <person name="Moule S."/>
            <person name="Price C."/>
            <person name="Quail M.A."/>
            <person name="Rabbinowitsch E."/>
            <person name="Rutherford K."/>
            <person name="Sanders M."/>
            <person name="Simmonds M."/>
            <person name="Songsivilai S."/>
            <person name="Stevens K."/>
            <person name="Tumapa S."/>
            <person name="Vesaratchavest M."/>
            <person name="Whitehead S."/>
            <person name="Yeats C."/>
            <person name="Barrell B.G."/>
            <person name="Oyston P.C.F."/>
            <person name="Parkhill J."/>
        </authorList>
    </citation>
    <scope>NUCLEOTIDE SEQUENCE [LARGE SCALE GENOMIC DNA]</scope>
    <source>
        <strain>K96243</strain>
    </source>
</reference>
<name>SDHD_BURPS</name>
<gene>
    <name evidence="1" type="primary">dsdA</name>
    <name type="ordered locus">BPSS2116</name>
</gene>
<keyword id="KW-0456">Lyase</keyword>
<keyword id="KW-0663">Pyridoxal phosphate</keyword>
<keyword id="KW-1185">Reference proteome</keyword>